<gene>
    <name type="primary">Sox2</name>
    <name type="synonym">Sox-2</name>
</gene>
<feature type="chain" id="PRO_0000048716" description="Transcription factor SOX-2">
    <location>
        <begin position="1"/>
        <end position="319"/>
    </location>
</feature>
<feature type="DNA-binding region" description="HMG box" evidence="4">
    <location>
        <begin position="43"/>
        <end position="111"/>
    </location>
</feature>
<feature type="region of interest" description="Disordered" evidence="5">
    <location>
        <begin position="1"/>
        <end position="43"/>
    </location>
</feature>
<feature type="region of interest" description="Disordered" evidence="5">
    <location>
        <begin position="247"/>
        <end position="267"/>
    </location>
</feature>
<feature type="region of interest" description="Disordered" evidence="5">
    <location>
        <begin position="299"/>
        <end position="319"/>
    </location>
</feature>
<feature type="short sequence motif" description="9aaTAD" evidence="1">
    <location>
        <begin position="274"/>
        <end position="282"/>
    </location>
</feature>
<feature type="compositionally biased region" description="Low complexity" evidence="5">
    <location>
        <begin position="248"/>
        <end position="263"/>
    </location>
</feature>
<feature type="modified residue" description="N6-methyllysine" evidence="3">
    <location>
        <position position="44"/>
    </location>
</feature>
<feature type="modified residue" description="N6-methyllysine" evidence="3">
    <location>
        <position position="119"/>
    </location>
</feature>
<feature type="modified residue" description="Phosphoserine" evidence="3">
    <location>
        <position position="253"/>
    </location>
</feature>
<feature type="cross-link" description="Glycyl lysine isopeptide (Lys-Gly) (interchain with G-Cter in SUMO)">
    <location>
        <position position="247"/>
    </location>
</feature>
<feature type="mutagenesis site" description="Absence of sumoylation. Increased FGF4 activation. No effect on nuclear localization." evidence="8">
    <original>K</original>
    <variation>R</variation>
    <location>
        <position position="247"/>
    </location>
</feature>
<feature type="sequence conflict" description="In Ref. 3; CAA63847." evidence="19" ref="3">
    <original>GGL</original>
    <variation>AGV</variation>
    <location>
        <begin position="153"/>
        <end position="155"/>
    </location>
</feature>
<feature type="sequence conflict" description="In Ref. 3; CAA63847." evidence="19" ref="3">
    <original>V</original>
    <variation>D</variation>
    <location>
        <position position="203"/>
    </location>
</feature>
<feature type="sequence conflict" description="In Ref. 3; CAA63847." evidence="19" ref="3">
    <original>KY</original>
    <variation>IN</variation>
    <location>
        <begin position="310"/>
        <end position="311"/>
    </location>
</feature>
<feature type="helix" evidence="20">
    <location>
        <begin position="49"/>
        <end position="62"/>
    </location>
</feature>
<feature type="helix" evidence="20">
    <location>
        <begin position="70"/>
        <end position="81"/>
    </location>
</feature>
<feature type="helix" evidence="20">
    <location>
        <begin position="86"/>
        <end position="106"/>
    </location>
</feature>
<sequence length="319" mass="34454">MYNMMETELKPPGPQQASGGGGGGGNATAAATGGNQKNSPDRVKRPMNAFMVWSRGQRRKMAQENPKMHNSEISKRLGAEWKLLSETEKRPFIDEAKRLRALHMKEHPDYKYRPRRKTKTLMKKDKYTLPGGLLAPGGNSMASGVGVGAGLGGGLNQRMDSYAHMNGWSNGSYSMMQEQLGYPQHPGLNAHGAAQMQPMHRYVVSALQYNSMTSSQTYMNGSPTYSMSYSQQGTPGMALGSMGSVVKSEASSSPPVVTSSSHSRAPCQAGDLRDMISMYLPGAEVPEPAAPSRLHMAQHYQSGPVPGTAKYGTLPLSHM</sequence>
<name>SOX2_MOUSE</name>
<keyword id="KW-0002">3D-structure</keyword>
<keyword id="KW-0010">Activator</keyword>
<keyword id="KW-0963">Cytoplasm</keyword>
<keyword id="KW-0217">Developmental protein</keyword>
<keyword id="KW-0238">DNA-binding</keyword>
<keyword id="KW-1017">Isopeptide bond</keyword>
<keyword id="KW-0488">Methylation</keyword>
<keyword id="KW-0539">Nucleus</keyword>
<keyword id="KW-0597">Phosphoprotein</keyword>
<keyword id="KW-1185">Reference proteome</keyword>
<keyword id="KW-0804">Transcription</keyword>
<keyword id="KW-0805">Transcription regulation</keyword>
<keyword id="KW-0832">Ubl conjugation</keyword>
<organism>
    <name type="scientific">Mus musculus</name>
    <name type="common">Mouse</name>
    <dbReference type="NCBI Taxonomy" id="10090"/>
    <lineage>
        <taxon>Eukaryota</taxon>
        <taxon>Metazoa</taxon>
        <taxon>Chordata</taxon>
        <taxon>Craniata</taxon>
        <taxon>Vertebrata</taxon>
        <taxon>Euteleostomi</taxon>
        <taxon>Mammalia</taxon>
        <taxon>Eutheria</taxon>
        <taxon>Euarchontoglires</taxon>
        <taxon>Glires</taxon>
        <taxon>Rodentia</taxon>
        <taxon>Myomorpha</taxon>
        <taxon>Muroidea</taxon>
        <taxon>Muridae</taxon>
        <taxon>Murinae</taxon>
        <taxon>Mus</taxon>
        <taxon>Mus</taxon>
    </lineage>
</organism>
<comment type="function">
    <text evidence="2 3 6 8 11 12">Transcription factor that forms a trimeric complex with POU5F1 (OCT3/4) on DNA and controls the expression of a number of genes involved in embryonic development such as YES1, FGF4, UTF1 and ZFP206 (PubMed:15863505, PubMed:17097055, PubMed:19740739, PubMed:32703285). Binds to the proximal enhancer region of NANOG (PubMed:15863505). Critical for early embryogenesis and for embryonic stem cell pluripotency (By similarity). Downstream SRRT target that mediates the promotion of neural stem cell self-renewal (PubMed:22198669). Keeps neural cells undifferentiated by counteracting the activity of proneural proteins and suppresses neuronal differentiation (By similarity). May function as a switch in neuronal development (By similarity).</text>
</comment>
<comment type="subunit">
    <text evidence="3 6 9 11 13 14 16">Interacts with ZSCAN10 (PubMed:19740739). Interacts with SOX3 and FGFR1 (PubMed:17728342). Interacts with GLIS1 (By similarity). Interacts with POU5F1; binds synergistically with POU5F1 to DNA (PubMed:15863505). Interacts with DDX56 (PubMed:32703285). Interacts with L3MBTL3 and DCAF5 (PubMed:30442713). The interaction with L3MBTL3 and DCAF5 requires methylation at Lys-44 and is necessary to target SOX2 for ubiquitination by the CRL4-DCAF5 E3 ubiquitin ligase complex (By similarity). Interacts with RCOR1/CoREST (PubMed:30442713). Interacts with PHF20L1 (PubMed:29358331). The interaction with PHF20L1 requires methylation at Lys-44 and Lys-119 and protects SOX2 from degradation (By similarity). Interacts with TRIM26; this interaction prevents ubiquitination by WWP2 (By similarity).</text>
</comment>
<comment type="interaction">
    <interactant intactId="EBI-2313612">
        <id>P48432</id>
    </interactant>
    <interactant intactId="EBI-2312517">
        <id>Q80Z64</id>
        <label>Nanog</label>
    </interactant>
    <organismsDiffer>false</organismsDiffer>
    <experiments>10</experiments>
</comment>
<comment type="interaction">
    <interactant intactId="EBI-2313612">
        <id>P48432</id>
    </interactant>
    <interactant intactId="EBI-1606219">
        <id>P20263</id>
        <label>Pou5f1</label>
    </interactant>
    <organismsDiffer>false</organismsDiffer>
    <experiments>4</experiments>
</comment>
<comment type="interaction">
    <interactant intactId="EBI-2313612">
        <id>P48432</id>
    </interactant>
    <interactant intactId="EBI-349034">
        <id>Q60520</id>
        <label>Sin3a</label>
    </interactant>
    <organismsDiffer>false</organismsDiffer>
    <experiments>3</experiments>
</comment>
<comment type="interaction">
    <interactant intactId="EBI-2313612">
        <id>P48432</id>
    </interactant>
    <interactant intactId="EBI-6921536">
        <id>Q00899</id>
        <label>Yy1</label>
    </interactant>
    <organismsDiffer>false</organismsDiffer>
    <experiments>2</experiments>
</comment>
<comment type="subcellular location">
    <subcellularLocation>
        <location evidence="4 8 10 15">Nucleus</location>
    </subcellularLocation>
    <subcellularLocation>
        <location evidence="10">Cytoplasm</location>
    </subcellularLocation>
    <text evidence="10">Nuclear import is facilitated by XPO4, a protein that usually acts as a nuclear export signal receptor.</text>
</comment>
<comment type="tissue specificity">
    <text evidence="6 15 18">Expressed in the cochlea (at protein level) (PubMed:32127020). Expressed in the brain and retina (PubMed:15863505, PubMed:7590241). A very low level of expression is seen in the stomach and lung (PubMed:15863505, PubMed:7590241). Expressed in the kidney (PubMed:15863505).</text>
</comment>
<comment type="developmental stage">
    <text evidence="17">Expressed in the basal cells of the tongue epithelium at birth until P20 (PubMed:32758484). Expressed in the suprabasal cells of the buccal mucosa and esophagus at P20 (PubMed:32758484).</text>
</comment>
<comment type="induction">
    <text evidence="12">By SRRT.</text>
</comment>
<comment type="domain">
    <text evidence="1">The 9aaTAD motif is a transactivation domain present in a large number of yeast and animal transcription factors.</text>
</comment>
<comment type="PTM">
    <text evidence="8">Sumoylation inhibits binding on DNA and negatively regulates the FGF4 transactivation.</text>
</comment>
<comment type="PTM">
    <text evidence="3">Methylation at Lys-44 and Lys-119 is necessary for the regulation of SOX2 proteasomal degradation.</text>
</comment>
<comment type="PTM">
    <text evidence="3">Ubiquitinated by WWP2, leading to proteasomal degradation.</text>
</comment>
<comment type="disruption phenotype">
    <text evidence="6">Embryonically lethal.</text>
</comment>
<comment type="biotechnology">
    <text evidence="7">POU5F1/OCT4, SOX2, MYC/c-Myc and KLF4 are the four Yamanaka factors. When combined, these factors are sufficient to reprogram differentiated cells to an embryonic-like state designated iPS (induced pluripotent stem) cells. iPS cells exhibit the morphology and growth properties of ES cells and express ES cell marker genes.</text>
</comment>
<evidence type="ECO:0000250" key="1">
    <source>
        <dbReference type="UniProtKB" id="P41225"/>
    </source>
</evidence>
<evidence type="ECO:0000250" key="2">
    <source>
        <dbReference type="UniProtKB" id="P48430"/>
    </source>
</evidence>
<evidence type="ECO:0000250" key="3">
    <source>
        <dbReference type="UniProtKB" id="P48431"/>
    </source>
</evidence>
<evidence type="ECO:0000255" key="4">
    <source>
        <dbReference type="PROSITE-ProRule" id="PRU00267"/>
    </source>
</evidence>
<evidence type="ECO:0000256" key="5">
    <source>
        <dbReference type="SAM" id="MobiDB-lite"/>
    </source>
</evidence>
<evidence type="ECO:0000269" key="6">
    <source>
    </source>
</evidence>
<evidence type="ECO:0000269" key="7">
    <source>
    </source>
</evidence>
<evidence type="ECO:0000269" key="8">
    <source>
    </source>
</evidence>
<evidence type="ECO:0000269" key="9">
    <source>
    </source>
</evidence>
<evidence type="ECO:0000269" key="10">
    <source>
    </source>
</evidence>
<evidence type="ECO:0000269" key="11">
    <source>
    </source>
</evidence>
<evidence type="ECO:0000269" key="12">
    <source>
    </source>
</evidence>
<evidence type="ECO:0000269" key="13">
    <source>
    </source>
</evidence>
<evidence type="ECO:0000269" key="14">
    <source>
    </source>
</evidence>
<evidence type="ECO:0000269" key="15">
    <source>
    </source>
</evidence>
<evidence type="ECO:0000269" key="16">
    <source>
    </source>
</evidence>
<evidence type="ECO:0000269" key="17">
    <source>
    </source>
</evidence>
<evidence type="ECO:0000269" key="18">
    <source>
    </source>
</evidence>
<evidence type="ECO:0000305" key="19"/>
<evidence type="ECO:0007829" key="20">
    <source>
        <dbReference type="PDB" id="1GT0"/>
    </source>
</evidence>
<dbReference type="EMBL" id="U31967">
    <property type="protein sequence ID" value="AAC31791.1"/>
    <property type="molecule type" value="mRNA"/>
</dbReference>
<dbReference type="EMBL" id="X94127">
    <property type="protein sequence ID" value="CAA63847.1"/>
    <property type="molecule type" value="Genomic_DNA"/>
</dbReference>
<dbReference type="CCDS" id="CCDS38413.1"/>
<dbReference type="PIR" id="S10949">
    <property type="entry name" value="S10949"/>
</dbReference>
<dbReference type="RefSeq" id="NP_035573.3">
    <property type="nucleotide sequence ID" value="NM_011443.4"/>
</dbReference>
<dbReference type="PDB" id="1GT0">
    <property type="method" value="X-ray"/>
    <property type="resolution" value="2.60 A"/>
    <property type="chains" value="D=41-120"/>
</dbReference>
<dbReference type="PDB" id="6HT5">
    <property type="method" value="X-ray"/>
    <property type="resolution" value="3.45 A"/>
    <property type="chains" value="D=41-120"/>
</dbReference>
<dbReference type="PDB" id="8BX1">
    <property type="method" value="X-ray"/>
    <property type="resolution" value="2.50 A"/>
    <property type="chains" value="E=41-120"/>
</dbReference>
<dbReference type="PDB" id="8BX2">
    <property type="method" value="X-ray"/>
    <property type="resolution" value="3.14 A"/>
    <property type="chains" value="E=41-120"/>
</dbReference>
<dbReference type="PDBsum" id="1GT0"/>
<dbReference type="PDBsum" id="6HT5"/>
<dbReference type="PDBsum" id="8BX1"/>
<dbReference type="PDBsum" id="8BX2"/>
<dbReference type="BMRB" id="P48432"/>
<dbReference type="SMR" id="P48432"/>
<dbReference type="BioGRID" id="203406">
    <property type="interactions" value="144"/>
</dbReference>
<dbReference type="CORUM" id="P48432"/>
<dbReference type="DIP" id="DIP-54522N"/>
<dbReference type="FunCoup" id="P48432">
    <property type="interactions" value="1210"/>
</dbReference>
<dbReference type="IntAct" id="P48432">
    <property type="interactions" value="11"/>
</dbReference>
<dbReference type="MINT" id="P48432"/>
<dbReference type="STRING" id="10090.ENSMUSP00000096755"/>
<dbReference type="GlyGen" id="P48432">
    <property type="glycosylation" value="7 sites, 1 O-linked glycan (6 sites)"/>
</dbReference>
<dbReference type="iPTMnet" id="P48432"/>
<dbReference type="PhosphoSitePlus" id="P48432"/>
<dbReference type="PaxDb" id="10090-ENSMUSP00000096755"/>
<dbReference type="PeptideAtlas" id="P48432"/>
<dbReference type="ProteomicsDB" id="261480"/>
<dbReference type="DNASU" id="20674"/>
<dbReference type="GeneID" id="20674"/>
<dbReference type="KEGG" id="mmu:20674"/>
<dbReference type="AGR" id="MGI:98364"/>
<dbReference type="CTD" id="6657"/>
<dbReference type="MGI" id="MGI:98364">
    <property type="gene designation" value="Sox2"/>
</dbReference>
<dbReference type="eggNOG" id="KOG0527">
    <property type="taxonomic scope" value="Eukaryota"/>
</dbReference>
<dbReference type="InParanoid" id="P48432"/>
<dbReference type="OrthoDB" id="6247875at2759"/>
<dbReference type="PhylomeDB" id="P48432"/>
<dbReference type="Reactome" id="R-MMU-3769402">
    <property type="pathway name" value="Deactivation of the beta-catenin transactivating complex"/>
</dbReference>
<dbReference type="BioGRID-ORCS" id="20674">
    <property type="hits" value="2 hits in 78 CRISPR screens"/>
</dbReference>
<dbReference type="EvolutionaryTrace" id="P48432"/>
<dbReference type="PRO" id="PR:P48432"/>
<dbReference type="Proteomes" id="UP000000589">
    <property type="component" value="Unplaced"/>
</dbReference>
<dbReference type="RNAct" id="P48432">
    <property type="molecule type" value="protein"/>
</dbReference>
<dbReference type="GO" id="GO:0000785">
    <property type="term" value="C:chromatin"/>
    <property type="evidence" value="ECO:0000314"/>
    <property type="project" value="MGI"/>
</dbReference>
<dbReference type="GO" id="GO:0005737">
    <property type="term" value="C:cytoplasm"/>
    <property type="evidence" value="ECO:0000314"/>
    <property type="project" value="UniProtKB"/>
</dbReference>
<dbReference type="GO" id="GO:0005654">
    <property type="term" value="C:nucleoplasm"/>
    <property type="evidence" value="ECO:0000304"/>
    <property type="project" value="Reactome"/>
</dbReference>
<dbReference type="GO" id="GO:0005634">
    <property type="term" value="C:nucleus"/>
    <property type="evidence" value="ECO:0000314"/>
    <property type="project" value="UniProtKB"/>
</dbReference>
<dbReference type="GO" id="GO:0005667">
    <property type="term" value="C:transcription regulator complex"/>
    <property type="evidence" value="ECO:0000314"/>
    <property type="project" value="MGI"/>
</dbReference>
<dbReference type="GO" id="GO:0003682">
    <property type="term" value="F:chromatin binding"/>
    <property type="evidence" value="ECO:0000314"/>
    <property type="project" value="MGI"/>
</dbReference>
<dbReference type="GO" id="GO:0031490">
    <property type="term" value="F:chromatin DNA binding"/>
    <property type="evidence" value="ECO:0000314"/>
    <property type="project" value="MGI"/>
</dbReference>
<dbReference type="GO" id="GO:0003677">
    <property type="term" value="F:DNA binding"/>
    <property type="evidence" value="ECO:0000314"/>
    <property type="project" value="MGI"/>
</dbReference>
<dbReference type="GO" id="GO:0003700">
    <property type="term" value="F:DNA-binding transcription factor activity"/>
    <property type="evidence" value="ECO:0000314"/>
    <property type="project" value="UniProtKB"/>
</dbReference>
<dbReference type="GO" id="GO:0000981">
    <property type="term" value="F:DNA-binding transcription factor activity, RNA polymerase II-specific"/>
    <property type="evidence" value="ECO:0000314"/>
    <property type="project" value="MGI"/>
</dbReference>
<dbReference type="GO" id="GO:0140297">
    <property type="term" value="F:DNA-binding transcription factor binding"/>
    <property type="evidence" value="ECO:0000353"/>
    <property type="project" value="BHF-UCL"/>
</dbReference>
<dbReference type="GO" id="GO:0000978">
    <property type="term" value="F:RNA polymerase II cis-regulatory region sequence-specific DNA binding"/>
    <property type="evidence" value="ECO:0000314"/>
    <property type="project" value="MGI"/>
</dbReference>
<dbReference type="GO" id="GO:0061629">
    <property type="term" value="F:RNA polymerase II-specific DNA-binding transcription factor binding"/>
    <property type="evidence" value="ECO:0000353"/>
    <property type="project" value="MGI"/>
</dbReference>
<dbReference type="GO" id="GO:0043565">
    <property type="term" value="F:sequence-specific DNA binding"/>
    <property type="evidence" value="ECO:0000314"/>
    <property type="project" value="UniProtKB"/>
</dbReference>
<dbReference type="GO" id="GO:0000976">
    <property type="term" value="F:transcription cis-regulatory region binding"/>
    <property type="evidence" value="ECO:0000314"/>
    <property type="project" value="UniProtKB"/>
</dbReference>
<dbReference type="GO" id="GO:0021984">
    <property type="term" value="P:adenohypophysis development"/>
    <property type="evidence" value="ECO:0000315"/>
    <property type="project" value="MGI"/>
</dbReference>
<dbReference type="GO" id="GO:0048646">
    <property type="term" value="P:anatomical structure formation involved in morphogenesis"/>
    <property type="evidence" value="ECO:0000315"/>
    <property type="project" value="MGI"/>
</dbReference>
<dbReference type="GO" id="GO:0045165">
    <property type="term" value="P:cell fate commitment"/>
    <property type="evidence" value="ECO:0000314"/>
    <property type="project" value="MGI"/>
</dbReference>
<dbReference type="GO" id="GO:0001708">
    <property type="term" value="P:cell fate specification"/>
    <property type="evidence" value="ECO:0000315"/>
    <property type="project" value="MGI"/>
</dbReference>
<dbReference type="GO" id="GO:0071276">
    <property type="term" value="P:cellular response to cadmium ion"/>
    <property type="evidence" value="ECO:0000314"/>
    <property type="project" value="MGI"/>
</dbReference>
<dbReference type="GO" id="GO:0021987">
    <property type="term" value="P:cerebral cortex development"/>
    <property type="evidence" value="ECO:0000315"/>
    <property type="project" value="MGI"/>
</dbReference>
<dbReference type="GO" id="GO:0050973">
    <property type="term" value="P:detection of mechanical stimulus involved in equilibrioception"/>
    <property type="evidence" value="ECO:0000315"/>
    <property type="project" value="MGI"/>
</dbReference>
<dbReference type="GO" id="GO:0050910">
    <property type="term" value="P:detection of mechanical stimulus involved in sensory perception of sound"/>
    <property type="evidence" value="ECO:0000315"/>
    <property type="project" value="MGI"/>
</dbReference>
<dbReference type="GO" id="GO:0048852">
    <property type="term" value="P:diencephalon morphogenesis"/>
    <property type="evidence" value="ECO:0000315"/>
    <property type="project" value="MGI"/>
</dbReference>
<dbReference type="GO" id="GO:0048568">
    <property type="term" value="P:embryonic organ development"/>
    <property type="evidence" value="ECO:0000315"/>
    <property type="project" value="MGI"/>
</dbReference>
<dbReference type="GO" id="GO:0001714">
    <property type="term" value="P:endodermal cell fate specification"/>
    <property type="evidence" value="ECO:0000266"/>
    <property type="project" value="MGI"/>
</dbReference>
<dbReference type="GO" id="GO:0060441">
    <property type="term" value="P:epithelial tube branching involved in lung morphogenesis"/>
    <property type="evidence" value="ECO:0000314"/>
    <property type="project" value="MGI"/>
</dbReference>
<dbReference type="GO" id="GO:0021879">
    <property type="term" value="P:forebrain neuron differentiation"/>
    <property type="evidence" value="ECO:0000315"/>
    <property type="project" value="MGI"/>
</dbReference>
<dbReference type="GO" id="GO:0010467">
    <property type="term" value="P:gene expression"/>
    <property type="evidence" value="ECO:0000315"/>
    <property type="project" value="MGI"/>
</dbReference>
<dbReference type="GO" id="GO:0042472">
    <property type="term" value="P:inner ear morphogenesis"/>
    <property type="evidence" value="ECO:0000315"/>
    <property type="project" value="MGI"/>
</dbReference>
<dbReference type="GO" id="GO:0060235">
    <property type="term" value="P:lens induction in camera-type eye"/>
    <property type="evidence" value="ECO:0000316"/>
    <property type="project" value="MGI"/>
</dbReference>
<dbReference type="GO" id="GO:0048286">
    <property type="term" value="P:lung alveolus development"/>
    <property type="evidence" value="ECO:0000314"/>
    <property type="project" value="MGI"/>
</dbReference>
<dbReference type="GO" id="GO:0030539">
    <property type="term" value="P:male genitalia development"/>
    <property type="evidence" value="ECO:0000315"/>
    <property type="project" value="MGI"/>
</dbReference>
<dbReference type="GO" id="GO:0090090">
    <property type="term" value="P:negative regulation of canonical Wnt signaling pathway"/>
    <property type="evidence" value="ECO:0000314"/>
    <property type="project" value="UniProtKB"/>
</dbReference>
<dbReference type="GO" id="GO:0045596">
    <property type="term" value="P:negative regulation of cell differentiation"/>
    <property type="evidence" value="ECO:0000315"/>
    <property type="project" value="MGI"/>
</dbReference>
<dbReference type="GO" id="GO:0045665">
    <property type="term" value="P:negative regulation of neuron differentiation"/>
    <property type="evidence" value="ECO:0000314"/>
    <property type="project" value="MGI"/>
</dbReference>
<dbReference type="GO" id="GO:0045668">
    <property type="term" value="P:negative regulation of osteoblast differentiation"/>
    <property type="evidence" value="ECO:0000314"/>
    <property type="project" value="MGI"/>
</dbReference>
<dbReference type="GO" id="GO:0000122">
    <property type="term" value="P:negative regulation of transcription by RNA polymerase II"/>
    <property type="evidence" value="ECO:0000316"/>
    <property type="project" value="MGI"/>
</dbReference>
<dbReference type="GO" id="GO:0030178">
    <property type="term" value="P:negative regulation of Wnt signaling pathway"/>
    <property type="evidence" value="ECO:0000316"/>
    <property type="project" value="MGI"/>
</dbReference>
<dbReference type="GO" id="GO:0007405">
    <property type="term" value="P:neuroblast proliferation"/>
    <property type="evidence" value="ECO:0000315"/>
    <property type="project" value="MGI"/>
</dbReference>
<dbReference type="GO" id="GO:0030182">
    <property type="term" value="P:neuron differentiation"/>
    <property type="evidence" value="ECO:0000314"/>
    <property type="project" value="MGI"/>
</dbReference>
<dbReference type="GO" id="GO:0048663">
    <property type="term" value="P:neuron fate commitment"/>
    <property type="evidence" value="ECO:0000315"/>
    <property type="project" value="MGI"/>
</dbReference>
<dbReference type="GO" id="GO:0097150">
    <property type="term" value="P:neuronal stem cell population maintenance"/>
    <property type="evidence" value="ECO:0000316"/>
    <property type="project" value="UniProtKB"/>
</dbReference>
<dbReference type="GO" id="GO:0007219">
    <property type="term" value="P:Notch signaling pathway"/>
    <property type="evidence" value="ECO:0000314"/>
    <property type="project" value="MGI"/>
</dbReference>
<dbReference type="GO" id="GO:0030910">
    <property type="term" value="P:olfactory placode formation"/>
    <property type="evidence" value="ECO:0000316"/>
    <property type="project" value="MGI"/>
</dbReference>
<dbReference type="GO" id="GO:0001649">
    <property type="term" value="P:osteoblast differentiation"/>
    <property type="evidence" value="ECO:0000314"/>
    <property type="project" value="MGI"/>
</dbReference>
<dbReference type="GO" id="GO:0046148">
    <property type="term" value="P:pigment biosynthetic process"/>
    <property type="evidence" value="ECO:0000315"/>
    <property type="project" value="MGI"/>
</dbReference>
<dbReference type="GO" id="GO:0030858">
    <property type="term" value="P:positive regulation of epithelial cell differentiation"/>
    <property type="evidence" value="ECO:0000314"/>
    <property type="project" value="MGI"/>
</dbReference>
<dbReference type="GO" id="GO:0002052">
    <property type="term" value="P:positive regulation of neuroblast proliferation"/>
    <property type="evidence" value="ECO:0000315"/>
    <property type="project" value="MGI"/>
</dbReference>
<dbReference type="GO" id="GO:0045666">
    <property type="term" value="P:positive regulation of neuron differentiation"/>
    <property type="evidence" value="ECO:0000315"/>
    <property type="project" value="MGI"/>
</dbReference>
<dbReference type="GO" id="GO:0045747">
    <property type="term" value="P:positive regulation of Notch signaling pathway"/>
    <property type="evidence" value="ECO:0000314"/>
    <property type="project" value="MGI"/>
</dbReference>
<dbReference type="GO" id="GO:0045944">
    <property type="term" value="P:positive regulation of transcription by RNA polymerase II"/>
    <property type="evidence" value="ECO:0000314"/>
    <property type="project" value="CACAO"/>
</dbReference>
<dbReference type="GO" id="GO:0006355">
    <property type="term" value="P:regulation of DNA-templated transcription"/>
    <property type="evidence" value="ECO:0000314"/>
    <property type="project" value="MGI"/>
</dbReference>
<dbReference type="GO" id="GO:0050767">
    <property type="term" value="P:regulation of neurogenesis"/>
    <property type="evidence" value="ECO:0000316"/>
    <property type="project" value="MGI"/>
</dbReference>
<dbReference type="GO" id="GO:0006357">
    <property type="term" value="P:regulation of transcription by RNA polymerase II"/>
    <property type="evidence" value="ECO:0000314"/>
    <property type="project" value="MGI"/>
</dbReference>
<dbReference type="GO" id="GO:0032526">
    <property type="term" value="P:response to retinoic acid"/>
    <property type="evidence" value="ECO:0000314"/>
    <property type="project" value="MGI"/>
</dbReference>
<dbReference type="GO" id="GO:0060042">
    <property type="term" value="P:retina morphogenesis in camera-type eye"/>
    <property type="evidence" value="ECO:0000315"/>
    <property type="project" value="MGI"/>
</dbReference>
<dbReference type="GO" id="GO:0007605">
    <property type="term" value="P:sensory perception of sound"/>
    <property type="evidence" value="ECO:0000315"/>
    <property type="project" value="MGI"/>
</dbReference>
<dbReference type="GO" id="GO:0035019">
    <property type="term" value="P:somatic stem cell population maintenance"/>
    <property type="evidence" value="ECO:0000315"/>
    <property type="project" value="MGI"/>
</dbReference>
<dbReference type="GO" id="GO:0048863">
    <property type="term" value="P:stem cell differentiation"/>
    <property type="evidence" value="ECO:0000314"/>
    <property type="project" value="MGI"/>
</dbReference>
<dbReference type="GO" id="GO:0019827">
    <property type="term" value="P:stem cell population maintenance"/>
    <property type="evidence" value="ECO:0000315"/>
    <property type="project" value="UniProtKB"/>
</dbReference>
<dbReference type="GO" id="GO:0043586">
    <property type="term" value="P:tongue development"/>
    <property type="evidence" value="ECO:0000315"/>
    <property type="project" value="MGI"/>
</dbReference>
<dbReference type="GO" id="GO:0001829">
    <property type="term" value="P:trophectodermal cell differentiation"/>
    <property type="evidence" value="ECO:0000315"/>
    <property type="project" value="MGI"/>
</dbReference>
<dbReference type="GO" id="GO:0016055">
    <property type="term" value="P:Wnt signaling pathway"/>
    <property type="evidence" value="ECO:0000316"/>
    <property type="project" value="MGI"/>
</dbReference>
<dbReference type="CDD" id="cd01388">
    <property type="entry name" value="HMG-box_SoxB"/>
    <property type="match status" value="1"/>
</dbReference>
<dbReference type="FunFam" id="1.10.30.10:FF:000002">
    <property type="entry name" value="transcription factor Sox-2"/>
    <property type="match status" value="1"/>
</dbReference>
<dbReference type="Gene3D" id="1.10.30.10">
    <property type="entry name" value="High mobility group box domain"/>
    <property type="match status" value="1"/>
</dbReference>
<dbReference type="IDEAL" id="IID50261"/>
<dbReference type="InterPro" id="IPR009071">
    <property type="entry name" value="HMG_box_dom"/>
</dbReference>
<dbReference type="InterPro" id="IPR036910">
    <property type="entry name" value="HMG_box_dom_sf"/>
</dbReference>
<dbReference type="InterPro" id="IPR022097">
    <property type="entry name" value="SOX_fam"/>
</dbReference>
<dbReference type="InterPro" id="IPR050140">
    <property type="entry name" value="SRY-related_HMG-box_TF-like"/>
</dbReference>
<dbReference type="PANTHER" id="PTHR10270">
    <property type="entry name" value="SOX TRANSCRIPTION FACTOR"/>
    <property type="match status" value="1"/>
</dbReference>
<dbReference type="PANTHER" id="PTHR10270:SF231">
    <property type="entry name" value="TRANSCRIPTION FACTOR SOX-2"/>
    <property type="match status" value="1"/>
</dbReference>
<dbReference type="Pfam" id="PF00505">
    <property type="entry name" value="HMG_box"/>
    <property type="match status" value="1"/>
</dbReference>
<dbReference type="Pfam" id="PF12336">
    <property type="entry name" value="SOXp"/>
    <property type="match status" value="1"/>
</dbReference>
<dbReference type="SMART" id="SM00398">
    <property type="entry name" value="HMG"/>
    <property type="match status" value="1"/>
</dbReference>
<dbReference type="SUPFAM" id="SSF47095">
    <property type="entry name" value="HMG-box"/>
    <property type="match status" value="1"/>
</dbReference>
<dbReference type="PROSITE" id="PS50118">
    <property type="entry name" value="HMG_BOX_2"/>
    <property type="match status" value="1"/>
</dbReference>
<accession>P48432</accession>
<protein>
    <recommendedName>
        <fullName>Transcription factor SOX-2</fullName>
    </recommendedName>
</protein>
<reference key="1">
    <citation type="journal article" date="1995" name="Genes Dev.">
        <title>Developmental-specific activity of the FGF-4 enhancer requires the synergistic action of Sox2 and Oct-3.</title>
        <authorList>
            <person name="Yuan H."/>
            <person name="Corbi N."/>
            <person name="Basilico C."/>
            <person name="Dailey L."/>
        </authorList>
    </citation>
    <scope>NUCLEOTIDE SEQUENCE [MRNA]</scope>
    <scope>TISSUE SPECIFICITY</scope>
</reference>
<reference key="2">
    <citation type="submission" date="1998-08" db="EMBL/GenBank/DDBJ databases">
        <authorList>
            <person name="Yuan H."/>
            <person name="Corbi N."/>
            <person name="Basilico C."/>
            <person name="Dailey L."/>
        </authorList>
    </citation>
    <scope>SEQUENCE REVISION</scope>
</reference>
<reference key="3">
    <citation type="journal article" date="1996" name="Development">
        <title>A comparison of the properties of Sox-3 with Sry and two related genes, Sox-1 and Sox-2.</title>
        <authorList>
            <person name="Collignon J."/>
            <person name="Sockanathan S."/>
            <person name="Hacker A."/>
            <person name="Cohen-Tannoudji M."/>
            <person name="Norris D."/>
            <person name="Rastan S."/>
            <person name="Stevanovic M."/>
            <person name="Goodfellow P.N."/>
            <person name="Lovell-Badge R."/>
        </authorList>
    </citation>
    <scope>NUCLEOTIDE SEQUENCE [GENOMIC DNA]</scope>
    <source>
        <strain>129</strain>
    </source>
</reference>
<reference key="4">
    <citation type="journal article" date="2005" name="J. Biol. Chem.">
        <title>Differential roles for Sox15 and Sox2 in transcriptional control in mouse embryonic stem cells.</title>
        <authorList>
            <person name="Maruyama M."/>
            <person name="Ichisaka T."/>
            <person name="Nakagawa M."/>
            <person name="Yamanaka S."/>
        </authorList>
    </citation>
    <scope>FUNCTION</scope>
    <scope>INTERACTION WITH POU5F1</scope>
    <scope>TISSUE SPECIFICITY</scope>
    <scope>DISRUPTION PHENOTYPE</scope>
</reference>
<reference key="5">
    <citation type="journal article" date="2006" name="Biochem. Biophys. Res. Commun.">
        <title>Inhibition of DNA binding of Sox2 by the SUMO conjugation.</title>
        <authorList>
            <person name="Tsuruzoe S."/>
            <person name="Ishihara K."/>
            <person name="Uchimura Y."/>
            <person name="Watanabe S."/>
            <person name="Sekita Y."/>
            <person name="Aoto T."/>
            <person name="Saitoh H."/>
            <person name="Yuasa Y."/>
            <person name="Niwa H."/>
            <person name="Kawasuji M."/>
            <person name="Baba H."/>
            <person name="Nakao M."/>
        </authorList>
    </citation>
    <scope>SUMOYLATION AT LYS-247</scope>
    <scope>MUTAGENESIS OF LYS-247</scope>
    <scope>SUBCELLULAR LOCATION</scope>
    <scope>FUNCTION</scope>
</reference>
<reference key="6">
    <citation type="journal article" date="2006" name="Cell">
        <title>Induction of pluripotent stem cells from mouse embryonic and adult fibroblast cultures by defined factors.</title>
        <authorList>
            <person name="Takahashi K."/>
            <person name="Yamanaka S."/>
        </authorList>
    </citation>
    <scope>BIOTECHNOLOGY</scope>
</reference>
<reference key="7">
    <citation type="journal article" date="2007" name="Development">
        <title>SOX3 activity during pharyngeal segmentation is required for craniofacial morphogenesis.</title>
        <authorList>
            <person name="Rizzoti K."/>
            <person name="Lovell-Badge R."/>
        </authorList>
    </citation>
    <scope>INTERACTION WITH SOX3 AND FGFR1</scope>
</reference>
<reference key="8">
    <citation type="journal article" date="2009" name="J. Biol. Chem.">
        <title>Zfp206, Oct4, and Sox2 are integrated components of a transcriptional regulatory network in embryonic stem cells.</title>
        <authorList>
            <person name="Yu H.B."/>
            <person name="Kunarso G."/>
            <person name="Hong F.H."/>
            <person name="Stanton L.W."/>
        </authorList>
    </citation>
    <scope>FUNCTION</scope>
    <scope>INTERACTION WITH ZSCAN10</scope>
</reference>
<reference key="9">
    <citation type="journal article" date="2009" name="J. Cell Biol.">
        <title>Exportin 4 mediates a novel nuclear import pathway for Sox family transcription factors.</title>
        <authorList>
            <person name="Gontan C."/>
            <person name="Guettler T."/>
            <person name="Engelen E."/>
            <person name="Demmers J."/>
            <person name="Fornerod M."/>
            <person name="Grosveld F.G."/>
            <person name="Tibboel D."/>
            <person name="Goerlich D."/>
            <person name="Poot R.A."/>
            <person name="Rottier R.J."/>
        </authorList>
    </citation>
    <scope>SUBCELLULAR LOCATION</scope>
</reference>
<reference key="10">
    <citation type="journal article" date="2012" name="Nature">
        <title>Ars2 maintains neural stem-cell identity through direct transcriptional activation of Sox2.</title>
        <authorList>
            <person name="Andreu-Agullo C."/>
            <person name="Maurin T."/>
            <person name="Thompson C.B."/>
            <person name="Lai E.C."/>
        </authorList>
    </citation>
    <scope>FUNCTION</scope>
    <scope>INDUCTION</scope>
</reference>
<reference key="11">
    <citation type="journal article" date="2018" name="J. Biol. Chem.">
        <title>LSD1 demethylase and the methyl-binding protein PHF20L1 prevent SET7 methyltransferase-dependent proteolysis of the stem-cell protein SOX2.</title>
        <authorList>
            <person name="Zhang C."/>
            <person name="Hoang N."/>
            <person name="Leng F."/>
            <person name="Saxena L."/>
            <person name="Lee L."/>
            <person name="Alejo S."/>
            <person name="Qi D."/>
            <person name="Khal A."/>
            <person name="Sun H."/>
            <person name="Lu F."/>
            <person name="Zhang H."/>
        </authorList>
    </citation>
    <scope>INTERACTION WITH PHF20L1</scope>
</reference>
<reference key="12">
    <citation type="journal article" date="2019" name="J. Biol. Chem.">
        <title>Proteolysis of methylated SOX2 protein is regulated by L3MBTL3 and CRL4-DCAF5 ubiquitin ligase.</title>
        <authorList>
            <person name="Zhang C."/>
            <person name="Leng F."/>
            <person name="Saxena L."/>
            <person name="Hoang N."/>
            <person name="Yu J."/>
            <person name="Alejo S."/>
            <person name="Lee L."/>
            <person name="Qi D."/>
            <person name="Lu F."/>
            <person name="Sun H."/>
            <person name="Zhang H."/>
        </authorList>
    </citation>
    <scope>INTERACTION WITH L3MBTL3; DCAF5 AND RCOR1</scope>
</reference>
<reference key="13">
    <citation type="journal article" date="2020" name="Dev. Biol.">
        <title>Keratin 13 deficiency causes white sponge nevus in mice.</title>
        <authorList>
            <person name="Simonson L."/>
            <person name="Vold S."/>
            <person name="Mowers C."/>
            <person name="Massey R.J."/>
            <person name="Ong I.M."/>
            <person name="Longley B.J."/>
            <person name="Chang H."/>
        </authorList>
    </citation>
    <scope>DEVELOPMENTAL STAGE</scope>
</reference>
<reference key="14">
    <citation type="journal article" date="2020" name="Mol. Brain">
        <title>Tsukushi is essential for the development of the inner ear.</title>
        <authorList>
            <person name="Miwa T."/>
            <person name="Ohta K."/>
            <person name="Ito N."/>
            <person name="Hattori S."/>
            <person name="Miyakawa T."/>
            <person name="Takeo T."/>
            <person name="Nakagata N."/>
            <person name="Song W.J."/>
            <person name="Minoda R."/>
        </authorList>
    </citation>
    <scope>SUBCELLULAR LOCATION</scope>
    <scope>TISSUE SPECIFICITY</scope>
</reference>
<reference key="15">
    <citation type="journal article" date="2020" name="Stem Cell Res Ther">
        <title>Ddx56 maintains proliferation of mouse embryonic stem cells via ribosome assembly and interaction with the Oct4/Sox2 complex.</title>
        <authorList>
            <person name="Wang J."/>
            <person name="Liu J."/>
            <person name="Ye M."/>
            <person name="Liu F."/>
            <person name="Wu S."/>
            <person name="Huang J."/>
            <person name="Shi G."/>
        </authorList>
    </citation>
    <scope>FUNCTION</scope>
    <scope>INTERACTION WITH DDX56</scope>
</reference>
<proteinExistence type="evidence at protein level"/>